<feature type="chain" id="PRO_0000230957" description="Transaldolase">
    <location>
        <begin position="1"/>
        <end position="322"/>
    </location>
</feature>
<feature type="active site" description="Schiff-base intermediate with substrate" evidence="2">
    <location>
        <position position="132"/>
    </location>
</feature>
<evidence type="ECO:0000250" key="1"/>
<evidence type="ECO:0000255" key="2">
    <source>
        <dbReference type="HAMAP-Rule" id="MF_00492"/>
    </source>
</evidence>
<name>TAL_PARUW</name>
<organism>
    <name type="scientific">Protochlamydia amoebophila (strain UWE25)</name>
    <dbReference type="NCBI Taxonomy" id="264201"/>
    <lineage>
        <taxon>Bacteria</taxon>
        <taxon>Pseudomonadati</taxon>
        <taxon>Chlamydiota</taxon>
        <taxon>Chlamydiia</taxon>
        <taxon>Parachlamydiales</taxon>
        <taxon>Parachlamydiaceae</taxon>
        <taxon>Candidatus Protochlamydia</taxon>
    </lineage>
</organism>
<accession>Q6MAI4</accession>
<proteinExistence type="inferred from homology"/>
<comment type="function">
    <text evidence="2">Transaldolase is important for the balance of metabolites in the pentose-phosphate pathway.</text>
</comment>
<comment type="catalytic activity">
    <reaction evidence="2">
        <text>D-sedoheptulose 7-phosphate + D-glyceraldehyde 3-phosphate = D-erythrose 4-phosphate + beta-D-fructose 6-phosphate</text>
        <dbReference type="Rhea" id="RHEA:17053"/>
        <dbReference type="ChEBI" id="CHEBI:16897"/>
        <dbReference type="ChEBI" id="CHEBI:57483"/>
        <dbReference type="ChEBI" id="CHEBI:57634"/>
        <dbReference type="ChEBI" id="CHEBI:59776"/>
        <dbReference type="EC" id="2.2.1.2"/>
    </reaction>
</comment>
<comment type="pathway">
    <text evidence="2">Carbohydrate degradation; pentose phosphate pathway; D-glyceraldehyde 3-phosphate and beta-D-fructose 6-phosphate from D-ribose 5-phosphate and D-xylulose 5-phosphate (non-oxidative stage): step 2/3.</text>
</comment>
<comment type="subunit">
    <text evidence="1">Homodimer.</text>
</comment>
<comment type="subcellular location">
    <subcellularLocation>
        <location evidence="2">Cytoplasm</location>
    </subcellularLocation>
</comment>
<comment type="similarity">
    <text evidence="2">Belongs to the transaldolase family. Type 1 subfamily.</text>
</comment>
<dbReference type="EC" id="2.2.1.2" evidence="2"/>
<dbReference type="EMBL" id="BX908798">
    <property type="protein sequence ID" value="CAF24415.1"/>
    <property type="molecule type" value="Genomic_DNA"/>
</dbReference>
<dbReference type="RefSeq" id="WP_011176236.1">
    <property type="nucleotide sequence ID" value="NC_005861.2"/>
</dbReference>
<dbReference type="SMR" id="Q6MAI4"/>
<dbReference type="STRING" id="264201.pc1691"/>
<dbReference type="KEGG" id="pcu:PC_RS08095"/>
<dbReference type="eggNOG" id="COG0176">
    <property type="taxonomic scope" value="Bacteria"/>
</dbReference>
<dbReference type="HOGENOM" id="CLU_047470_0_1_0"/>
<dbReference type="OrthoDB" id="9807051at2"/>
<dbReference type="UniPathway" id="UPA00115">
    <property type="reaction ID" value="UER00414"/>
</dbReference>
<dbReference type="Proteomes" id="UP000000529">
    <property type="component" value="Chromosome"/>
</dbReference>
<dbReference type="GO" id="GO:0005737">
    <property type="term" value="C:cytoplasm"/>
    <property type="evidence" value="ECO:0007669"/>
    <property type="project" value="UniProtKB-SubCell"/>
</dbReference>
<dbReference type="GO" id="GO:0004801">
    <property type="term" value="F:transaldolase activity"/>
    <property type="evidence" value="ECO:0000250"/>
    <property type="project" value="UniProtKB"/>
</dbReference>
<dbReference type="GO" id="GO:0005975">
    <property type="term" value="P:carbohydrate metabolic process"/>
    <property type="evidence" value="ECO:0007669"/>
    <property type="project" value="InterPro"/>
</dbReference>
<dbReference type="GO" id="GO:0006098">
    <property type="term" value="P:pentose-phosphate shunt"/>
    <property type="evidence" value="ECO:0007669"/>
    <property type="project" value="UniProtKB-UniRule"/>
</dbReference>
<dbReference type="CDD" id="cd00957">
    <property type="entry name" value="Transaldolase_TalAB"/>
    <property type="match status" value="1"/>
</dbReference>
<dbReference type="FunFam" id="3.20.20.70:FF:000002">
    <property type="entry name" value="Transaldolase"/>
    <property type="match status" value="1"/>
</dbReference>
<dbReference type="Gene3D" id="3.20.20.70">
    <property type="entry name" value="Aldolase class I"/>
    <property type="match status" value="1"/>
</dbReference>
<dbReference type="HAMAP" id="MF_00492">
    <property type="entry name" value="Transaldolase_1"/>
    <property type="match status" value="1"/>
</dbReference>
<dbReference type="InterPro" id="IPR013785">
    <property type="entry name" value="Aldolase_TIM"/>
</dbReference>
<dbReference type="InterPro" id="IPR001585">
    <property type="entry name" value="TAL/FSA"/>
</dbReference>
<dbReference type="InterPro" id="IPR004730">
    <property type="entry name" value="Transaldolase_1"/>
</dbReference>
<dbReference type="InterPro" id="IPR018225">
    <property type="entry name" value="Transaldolase_AS"/>
</dbReference>
<dbReference type="NCBIfam" id="NF009001">
    <property type="entry name" value="PRK12346.1"/>
    <property type="match status" value="1"/>
</dbReference>
<dbReference type="NCBIfam" id="TIGR00874">
    <property type="entry name" value="talAB"/>
    <property type="match status" value="1"/>
</dbReference>
<dbReference type="PANTHER" id="PTHR10683">
    <property type="entry name" value="TRANSALDOLASE"/>
    <property type="match status" value="1"/>
</dbReference>
<dbReference type="PANTHER" id="PTHR10683:SF18">
    <property type="entry name" value="TRANSALDOLASE"/>
    <property type="match status" value="1"/>
</dbReference>
<dbReference type="Pfam" id="PF00923">
    <property type="entry name" value="TAL_FSA"/>
    <property type="match status" value="1"/>
</dbReference>
<dbReference type="SUPFAM" id="SSF51569">
    <property type="entry name" value="Aldolase"/>
    <property type="match status" value="1"/>
</dbReference>
<dbReference type="PROSITE" id="PS01054">
    <property type="entry name" value="TRANSALDOLASE_1"/>
    <property type="match status" value="1"/>
</dbReference>
<sequence length="322" mass="36045">MEKNKLDQLKSMTTIVIDTGDIEAIKEYSPTDATTNPSLILSAVEKPAYKPLMEEAYHYSQKAKSSGEQISLFLDKLFVNVGCEILKLIPGRVSTEVDARLSFDVEGSIQKAQSLIALYKEMGIEKERILIKLASTWEGGLAAKQLEKMGIHCNMTLLFSMPQAIHCAEAQATLISPFVGRILDWYKKHDNVPGYAPAEDPGVKSVTTIYHYFKKFSYKTQIMGASFRNKEEILELAGCDLLTISPHFLQELHDASGNVEQKLDAAKSKQLNIEPIKMNEKAFRLALNDDAMATEKLSEGIRNFAKDAQKLEKMLRTTYKIG</sequence>
<protein>
    <recommendedName>
        <fullName evidence="2">Transaldolase</fullName>
        <ecNumber evidence="2">2.2.1.2</ecNumber>
    </recommendedName>
</protein>
<gene>
    <name evidence="2" type="primary">tal</name>
    <name type="ordered locus">pc1691</name>
</gene>
<reference key="1">
    <citation type="journal article" date="2004" name="Science">
        <title>Illuminating the evolutionary history of chlamydiae.</title>
        <authorList>
            <person name="Horn M."/>
            <person name="Collingro A."/>
            <person name="Schmitz-Esser S."/>
            <person name="Beier C.L."/>
            <person name="Purkhold U."/>
            <person name="Fartmann B."/>
            <person name="Brandt P."/>
            <person name="Nyakatura G.J."/>
            <person name="Droege M."/>
            <person name="Frishman D."/>
            <person name="Rattei T."/>
            <person name="Mewes H.-W."/>
            <person name="Wagner M."/>
        </authorList>
    </citation>
    <scope>NUCLEOTIDE SEQUENCE [LARGE SCALE GENOMIC DNA]</scope>
    <source>
        <strain>UWE25</strain>
    </source>
</reference>
<keyword id="KW-0963">Cytoplasm</keyword>
<keyword id="KW-0570">Pentose shunt</keyword>
<keyword id="KW-1185">Reference proteome</keyword>
<keyword id="KW-0704">Schiff base</keyword>
<keyword id="KW-0808">Transferase</keyword>